<comment type="function">
    <text evidence="1">Stimulates the transcription of various genes by recognizing and binding to a CCAAT motif in promoters.</text>
</comment>
<comment type="subunit">
    <text evidence="1">Heterotrimeric transcription factor composed of three components, NF-YA, NF-YB and NF-YC. NF-YB and NF-YC must interact and dimerize for NF-YA association and DNA binding (By similarity).</text>
</comment>
<comment type="subcellular location">
    <subcellularLocation>
        <location evidence="1">Nucleus</location>
    </subcellularLocation>
</comment>
<comment type="tissue specificity">
    <text evidence="3">Expressed in flowers and siliques.</text>
</comment>
<comment type="similarity">
    <text evidence="4">Belongs to the NFYC/HAP5 subunit family.</text>
</comment>
<sequence length="202" mass="22010">MAENNNNNGDNMNNDNHQQPPSYSQLPPMASSNPQLRNYWIEQMETVSDFKNRQLPLARIKKIMKADPDVHMVSAEAPIIFAKACEMFIVDLTMRSWLKAEENKRHTLQKSDISNAVASSFTYDFLLDVVPKDESIATADPGFVAMPHPDGGGVPQYYYPPGVVMGTPMVGSGMYAPSQAWPAAAGDGEDDAEDNGGNGGGN</sequence>
<name>NFYC6_ARATH</name>
<dbReference type="EMBL" id="AB025619">
    <property type="protein sequence ID" value="BAB09133.1"/>
    <property type="molecule type" value="Genomic_DNA"/>
</dbReference>
<dbReference type="EMBL" id="CP002688">
    <property type="protein sequence ID" value="AED95950.1"/>
    <property type="molecule type" value="Genomic_DNA"/>
</dbReference>
<dbReference type="EMBL" id="BT014783">
    <property type="protein sequence ID" value="AAT41766.1"/>
    <property type="molecule type" value="mRNA"/>
</dbReference>
<dbReference type="EMBL" id="BT015006">
    <property type="protein sequence ID" value="AAT70457.1"/>
    <property type="molecule type" value="mRNA"/>
</dbReference>
<dbReference type="RefSeq" id="NP_199859.1">
    <property type="nucleotide sequence ID" value="NM_124430.3"/>
</dbReference>
<dbReference type="SMR" id="Q9FGP7"/>
<dbReference type="BioGRID" id="20362">
    <property type="interactions" value="18"/>
</dbReference>
<dbReference type="FunCoup" id="Q9FGP7">
    <property type="interactions" value="569"/>
</dbReference>
<dbReference type="IntAct" id="Q9FGP7">
    <property type="interactions" value="3"/>
</dbReference>
<dbReference type="STRING" id="3702.Q9FGP7"/>
<dbReference type="PaxDb" id="3702-AT5G50480.1"/>
<dbReference type="EnsemblPlants" id="AT5G50480.1">
    <property type="protein sequence ID" value="AT5G50480.1"/>
    <property type="gene ID" value="AT5G50480"/>
</dbReference>
<dbReference type="GeneID" id="835116"/>
<dbReference type="Gramene" id="AT5G50480.1">
    <property type="protein sequence ID" value="AT5G50480.1"/>
    <property type="gene ID" value="AT5G50480"/>
</dbReference>
<dbReference type="KEGG" id="ath:AT5G50480"/>
<dbReference type="Araport" id="AT5G50480"/>
<dbReference type="TAIR" id="AT5G50480">
    <property type="gene designation" value="NF-YC6"/>
</dbReference>
<dbReference type="eggNOG" id="KOG1657">
    <property type="taxonomic scope" value="Eukaryota"/>
</dbReference>
<dbReference type="HOGENOM" id="CLU_045277_0_2_1"/>
<dbReference type="InParanoid" id="Q9FGP7"/>
<dbReference type="OMA" id="CEMFIVD"/>
<dbReference type="OrthoDB" id="1272441at2759"/>
<dbReference type="PhylomeDB" id="Q9FGP7"/>
<dbReference type="PRO" id="PR:Q9FGP7"/>
<dbReference type="Proteomes" id="UP000006548">
    <property type="component" value="Chromosome 5"/>
</dbReference>
<dbReference type="ExpressionAtlas" id="Q9FGP7">
    <property type="expression patterns" value="baseline and differential"/>
</dbReference>
<dbReference type="GO" id="GO:0005634">
    <property type="term" value="C:nucleus"/>
    <property type="evidence" value="ECO:0007669"/>
    <property type="project" value="UniProtKB-SubCell"/>
</dbReference>
<dbReference type="GO" id="GO:0003700">
    <property type="term" value="F:DNA-binding transcription factor activity"/>
    <property type="evidence" value="ECO:0000250"/>
    <property type="project" value="TAIR"/>
</dbReference>
<dbReference type="GO" id="GO:0046982">
    <property type="term" value="F:protein heterodimerization activity"/>
    <property type="evidence" value="ECO:0007669"/>
    <property type="project" value="InterPro"/>
</dbReference>
<dbReference type="GO" id="GO:0000976">
    <property type="term" value="F:transcription cis-regulatory region binding"/>
    <property type="evidence" value="ECO:0000353"/>
    <property type="project" value="TAIR"/>
</dbReference>
<dbReference type="CDD" id="cd22908">
    <property type="entry name" value="HFD_NFYC-like"/>
    <property type="match status" value="1"/>
</dbReference>
<dbReference type="FunFam" id="1.10.20.10:FF:000006">
    <property type="entry name" value="Nuclear transcription factor Y subunit gamma"/>
    <property type="match status" value="1"/>
</dbReference>
<dbReference type="Gene3D" id="1.10.20.10">
    <property type="entry name" value="Histone, subunit A"/>
    <property type="match status" value="1"/>
</dbReference>
<dbReference type="InterPro" id="IPR009072">
    <property type="entry name" value="Histone-fold"/>
</dbReference>
<dbReference type="InterPro" id="IPR007125">
    <property type="entry name" value="Histone_H2A/H2B/H3"/>
</dbReference>
<dbReference type="InterPro" id="IPR050568">
    <property type="entry name" value="Transcr_DNA_Rep_Reg"/>
</dbReference>
<dbReference type="PANTHER" id="PTHR10252">
    <property type="entry name" value="HISTONE-LIKE TRANSCRIPTION FACTOR CCAAT-RELATED"/>
    <property type="match status" value="1"/>
</dbReference>
<dbReference type="PANTHER" id="PTHR10252:SF39">
    <property type="entry name" value="NUCLEAR TRANSCRIPTION FACTOR Y SUBUNIT C-6"/>
    <property type="match status" value="1"/>
</dbReference>
<dbReference type="Pfam" id="PF00125">
    <property type="entry name" value="Histone"/>
    <property type="match status" value="1"/>
</dbReference>
<dbReference type="SUPFAM" id="SSF47113">
    <property type="entry name" value="Histone-fold"/>
    <property type="match status" value="1"/>
</dbReference>
<feature type="chain" id="PRO_0000218255" description="Nuclear transcription factor Y subunit C-6">
    <location>
        <begin position="1"/>
        <end position="202"/>
    </location>
</feature>
<feature type="region of interest" description="Disordered" evidence="2">
    <location>
        <begin position="1"/>
        <end position="29"/>
    </location>
</feature>
<feature type="region of interest" description="Disordered" evidence="2">
    <location>
        <begin position="180"/>
        <end position="202"/>
    </location>
</feature>
<feature type="compositionally biased region" description="Low complexity" evidence="2">
    <location>
        <begin position="1"/>
        <end position="16"/>
    </location>
</feature>
<feature type="compositionally biased region" description="Polar residues" evidence="2">
    <location>
        <begin position="17"/>
        <end position="29"/>
    </location>
</feature>
<gene>
    <name type="primary">NFYC6</name>
    <name type="ordered locus">At5g50480</name>
    <name type="ORF">MBA10.3</name>
</gene>
<protein>
    <recommendedName>
        <fullName>Nuclear transcription factor Y subunit C-6</fullName>
        <shortName>AtNF-YC-6</shortName>
    </recommendedName>
</protein>
<accession>Q9FGP7</accession>
<evidence type="ECO:0000250" key="1"/>
<evidence type="ECO:0000256" key="2">
    <source>
        <dbReference type="SAM" id="MobiDB-lite"/>
    </source>
</evidence>
<evidence type="ECO:0000269" key="3">
    <source>
    </source>
</evidence>
<evidence type="ECO:0000305" key="4"/>
<keyword id="KW-0010">Activator</keyword>
<keyword id="KW-0238">DNA-binding</keyword>
<keyword id="KW-0539">Nucleus</keyword>
<keyword id="KW-1185">Reference proteome</keyword>
<keyword id="KW-0804">Transcription</keyword>
<keyword id="KW-0805">Transcription regulation</keyword>
<reference key="1">
    <citation type="submission" date="1999-04" db="EMBL/GenBank/DDBJ databases">
        <title>Structural analysis of Arabidopsis thaliana chromosome 5. XI.</title>
        <authorList>
            <person name="Kaneko T."/>
            <person name="Katoh T."/>
            <person name="Asamizu E."/>
            <person name="Sato S."/>
            <person name="Nakamura Y."/>
            <person name="Kotani H."/>
            <person name="Tabata S."/>
        </authorList>
    </citation>
    <scope>NUCLEOTIDE SEQUENCE [LARGE SCALE GENOMIC DNA]</scope>
    <source>
        <strain>cv. Columbia</strain>
    </source>
</reference>
<reference key="2">
    <citation type="journal article" date="2017" name="Plant J.">
        <title>Araport11: a complete reannotation of the Arabidopsis thaliana reference genome.</title>
        <authorList>
            <person name="Cheng C.Y."/>
            <person name="Krishnakumar V."/>
            <person name="Chan A.P."/>
            <person name="Thibaud-Nissen F."/>
            <person name="Schobel S."/>
            <person name="Town C.D."/>
        </authorList>
    </citation>
    <scope>GENOME REANNOTATION</scope>
    <source>
        <strain>cv. Columbia</strain>
    </source>
</reference>
<reference key="3">
    <citation type="submission" date="2004-07" db="EMBL/GenBank/DDBJ databases">
        <title>Arabidopsis ORF clones.</title>
        <authorList>
            <person name="Shinn P."/>
            <person name="Chen H."/>
            <person name="Cheuk R.F."/>
            <person name="Kim C.J."/>
            <person name="Ecker J.R."/>
        </authorList>
    </citation>
    <scope>NUCLEOTIDE SEQUENCE [LARGE SCALE MRNA]</scope>
    <source>
        <strain>cv. Columbia</strain>
    </source>
</reference>
<reference key="4">
    <citation type="journal article" date="2001" name="Gene">
        <title>Regulation of the CCAAT-binding NF-Y subunits in Arabidopsis thaliana.</title>
        <authorList>
            <person name="Gusmaroli G."/>
            <person name="Tonelli C."/>
            <person name="Mantovani R."/>
        </authorList>
    </citation>
    <scope>TISSUE SPECIFICITY</scope>
</reference>
<reference key="5">
    <citation type="journal article" date="2002" name="Gene">
        <title>Regulation of novel members of the Arabidopsis thaliana CCAAT-binding nuclear factor Y subunits.</title>
        <authorList>
            <person name="Gusmaroli G."/>
            <person name="Tonelli C."/>
            <person name="Mantovani R."/>
        </authorList>
    </citation>
    <scope>GENE FAMILY</scope>
    <scope>NOMENCLATURE</scope>
</reference>
<proteinExistence type="evidence at transcript level"/>
<organism>
    <name type="scientific">Arabidopsis thaliana</name>
    <name type="common">Mouse-ear cress</name>
    <dbReference type="NCBI Taxonomy" id="3702"/>
    <lineage>
        <taxon>Eukaryota</taxon>
        <taxon>Viridiplantae</taxon>
        <taxon>Streptophyta</taxon>
        <taxon>Embryophyta</taxon>
        <taxon>Tracheophyta</taxon>
        <taxon>Spermatophyta</taxon>
        <taxon>Magnoliopsida</taxon>
        <taxon>eudicotyledons</taxon>
        <taxon>Gunneridae</taxon>
        <taxon>Pentapetalae</taxon>
        <taxon>rosids</taxon>
        <taxon>malvids</taxon>
        <taxon>Brassicales</taxon>
        <taxon>Brassicaceae</taxon>
        <taxon>Camelineae</taxon>
        <taxon>Arabidopsis</taxon>
    </lineage>
</organism>